<proteinExistence type="evidence at protein level"/>
<evidence type="ECO:0000250" key="1">
    <source>
        <dbReference type="UniProtKB" id="A0A017SP50"/>
    </source>
</evidence>
<evidence type="ECO:0000250" key="2">
    <source>
        <dbReference type="UniProtKB" id="A0A017SR40"/>
    </source>
</evidence>
<evidence type="ECO:0000250" key="3">
    <source>
        <dbReference type="UniProtKB" id="A0A2D1VNM2"/>
    </source>
</evidence>
<evidence type="ECO:0000255" key="4"/>
<evidence type="ECO:0000255" key="5">
    <source>
        <dbReference type="PROSITE-ProRule" id="PRU00258"/>
    </source>
</evidence>
<evidence type="ECO:0000256" key="6">
    <source>
        <dbReference type="SAM" id="MobiDB-lite"/>
    </source>
</evidence>
<evidence type="ECO:0000269" key="7">
    <source>
    </source>
</evidence>
<evidence type="ECO:0000303" key="8">
    <source>
    </source>
</evidence>
<evidence type="ECO:0000305" key="9"/>
<evidence type="ECO:0000305" key="10">
    <source>
    </source>
</evidence>
<keyword id="KW-0436">Ligase</keyword>
<keyword id="KW-0596">Phosphopantetheine</keyword>
<keyword id="KW-0597">Phosphoprotein</keyword>
<keyword id="KW-1185">Reference proteome</keyword>
<keyword id="KW-0677">Repeat</keyword>
<gene>
    <name evidence="8" type="primary">criC</name>
    <name type="ORF">SI65_10013</name>
</gene>
<feature type="chain" id="PRO_0000456854" description="Nonribosomal peptide synthetase criC">
    <location>
        <begin position="1"/>
        <end position="2131"/>
    </location>
</feature>
<feature type="domain" description="Carrier 1" evidence="5">
    <location>
        <begin position="525"/>
        <end position="601"/>
    </location>
</feature>
<feature type="domain" description="Carrier 2" evidence="5">
    <location>
        <begin position="1569"/>
        <end position="1647"/>
    </location>
</feature>
<feature type="region of interest" description="Adenylation 1" evidence="4">
    <location>
        <begin position="13"/>
        <end position="407"/>
    </location>
</feature>
<feature type="region of interest" description="Disordered" evidence="6">
    <location>
        <begin position="598"/>
        <end position="627"/>
    </location>
</feature>
<feature type="region of interest" description="Condensation 1" evidence="4">
    <location>
        <begin position="625"/>
        <end position="1018"/>
    </location>
</feature>
<feature type="region of interest" description="Adenylation 2" evidence="4">
    <location>
        <begin position="1069"/>
        <end position="1447"/>
    </location>
</feature>
<feature type="region of interest" description="Condensation 2" evidence="4">
    <location>
        <begin position="1688"/>
        <end position="2086"/>
    </location>
</feature>
<feature type="modified residue" description="O-(pantetheine 4'-phosphoryl)serine" evidence="5">
    <location>
        <position position="562"/>
    </location>
</feature>
<feature type="modified residue" description="O-(pantetheine 4'-phosphoryl)serine" evidence="5">
    <location>
        <position position="1607"/>
    </location>
</feature>
<comment type="function">
    <text evidence="1 2 3 7">Nonribosomal peptide synthetase; part of the gene cluster that mediates the biosynthesis of echinulin family alkaloid (PubMed:35843946). The pathway begins with the biosynthesis of the cyclic dipeptide cyclo-L-Trp-L-Ala (cyclo-TA) by the NRPS criC via condensation of L-alanine and L-tryptophan (PubMed:35843946). The prenyltransferase criA then catalyzes the first prenylation step, a reverse prenylation reaction at C2, to yield preechinulin (By similarity). Preechinulin is the substrate of the cytochrome P450 monooxygenase criE that catalyzes the formation of the double bond between C10 and C11 to produce neoechulin A (By similarity). The unique prenyltransferase criF functions as a competitive enzyme with criE for preechinulin metabolization and uses preechinulin for effective regiospecific prenylations. Preechinulin is prenylated by criF at C5 or C7. C7-prenylation leads to accumulation of tardioxopiperazine B without further modification by criF. In contrast, the C5-prenylated tardioxopiperazine A can be prenylated again by criF, predominantly at C7 to form echinulin or less frequently at C4 to give variecolorin L. CriF also accepts neoechilunin A to produce varlecolorin G (prenylation at C5) or isoechinulin A (prenylation at C7). CriF further converts isoechinulin A into dehydroechinulin. Moreover, a yet unidentified enzyme can also convert neoechilunin A into neoechilunin B by introducing a double bond between positions C14 and C17 and thus provides a further substrate to criF for C5 and C7 prenylation (By similarity).</text>
</comment>
<comment type="catalytic activity">
    <reaction evidence="7">
        <text>L-tryptophan + L-alanine + 2 ATP = cyclo(L-tryptophyl-L-alanyl) + 2 ADP + 2 phosphate + 2 H(+)</text>
        <dbReference type="Rhea" id="RHEA:73763"/>
        <dbReference type="ChEBI" id="CHEBI:15378"/>
        <dbReference type="ChEBI" id="CHEBI:30616"/>
        <dbReference type="ChEBI" id="CHEBI:43474"/>
        <dbReference type="ChEBI" id="CHEBI:57912"/>
        <dbReference type="ChEBI" id="CHEBI:57972"/>
        <dbReference type="ChEBI" id="CHEBI:193002"/>
        <dbReference type="ChEBI" id="CHEBI:456216"/>
    </reaction>
    <physiologicalReaction direction="left-to-right" evidence="7">
        <dbReference type="Rhea" id="RHEA:73764"/>
    </physiologicalReaction>
</comment>
<comment type="cofactor">
    <cofactor evidence="5">
        <name>pantetheine 4'-phosphate</name>
        <dbReference type="ChEBI" id="CHEBI:47942"/>
    </cofactor>
</comment>
<comment type="pathway">
    <text evidence="7">Secondary metabolite biosynthesis.</text>
</comment>
<comment type="pathway">
    <text evidence="7">Alkaloid biosynthesis.</text>
</comment>
<comment type="domain">
    <text evidence="10">NRP synthetases are composed of discrete domains (adenylation (A), thiolation (T) or peptidyl carrier protein (PCP) and condensation (C) domains) which when grouped together are referred to as a single module. Each module is responsible for the recognition (via the A domain) and incorporation of a single amino acid into the growing peptide product. Thus, an NRP synthetase is generally composed of one or more modules and can terminate in a thioesterase domain (TE) that releases the newly synthesized peptide from the enzyme. Occasionally, epimerase (E) domains (responsible for L- to D-amino acid conversion) are present within the NRP synthetase. CriC has the following architecture: A-T-C-A-T-C.</text>
</comment>
<comment type="similarity">
    <text evidence="9">Belongs to the NRP synthetase family.</text>
</comment>
<reference key="1">
    <citation type="journal article" date="2016" name="BMC Genomics">
        <title>Comparative genomic and transcriptomic analyses of the Fuzhuan brick tea-fermentation fungus Aspergillus cristatus.</title>
        <authorList>
            <person name="Ge Y."/>
            <person name="Wang Y."/>
            <person name="Liu Y."/>
            <person name="Tan Y."/>
            <person name="Ren X."/>
            <person name="Zhang X."/>
            <person name="Hyde K.D."/>
            <person name="Liu Y."/>
            <person name="Liu Z."/>
        </authorList>
    </citation>
    <scope>NUCLEOTIDE SEQUENCE [LARGE SCALE GENOMIC DNA]</scope>
    <source>
        <strain>GZAAS20.1005</strain>
    </source>
</reference>
<reference key="2">
    <citation type="journal article" date="2022" name="Microb. Cell Fact.">
        <title>Efficient production of a cyclic dipeptide (cyclo-TA) using heterologous expression system of filamentous fungus Aspergillus oryzae.</title>
        <authorList>
            <person name="Qi J."/>
            <person name="Han H."/>
            <person name="Sui D."/>
            <person name="Tan S."/>
            <person name="Liu C."/>
            <person name="Wang P."/>
            <person name="Xie C."/>
            <person name="Xia X."/>
            <person name="Gao J.M."/>
            <person name="Liu C."/>
        </authorList>
    </citation>
    <scope>FUNCTION</scope>
    <scope>DOMAIN</scope>
    <scope>CATALYTIC ACTIVITY</scope>
    <scope>PATHWAY</scope>
</reference>
<accession>A0A1E3B0T2</accession>
<name>CRIC_ASPCR</name>
<sequence length="2131" mass="235696">MGSIESDSVLSFFSQQCFQHPDNTAIDDGPNGNLSYSQLDQQSSTLAHCLRQNGIKAGQVVPLLTTSRLEMVIAVLGILKAGGVYVPVDIDQWPADRINYVLGRTCSGLVVYTGDHIPSGINLEEKCRVVQVQIRLENELKAQYEPNPRPRLMCIIFTSGTTDKPKGVMVPHTSVARFVTSPGFNYDIVPGDRVLLVLSVAFDACMGTLFNTICNGGTVILANRLNFQERSRQCTVLVMTPSILDVLSPPQSPSDYPQLERIFLGGETPSQQLLEAWSAFNDVALWIAYGPTEATCAVLCGRLQASSETGQFHPTRLGHSIPGSSVLLLTERMETIQDSNMEGEICIEGPCLTDGYWQDEERTKDRFIEYHGRRVYRTGDLGRFVTTEDNETAIEFCGRRDRVTKIRGFLVNLELDVDAGLRRLDPNITAVFSILLDRKLCTAVVPSSVDCRNLQAAWRLVAPPYLVPDKMVALDGLPLTANGKFDPRQVISILRDALQKDATMQNGTSHNNGAANDRKQYNWRSGPLTIDQTIIKGLQQVLGISQSEINMKDSAVFQGVHSLAAARLSTFCRHHGYNVSVESILTEPSLHALVEKNRHETENRPDSSAFATRTPEESSMPTQGPVTPLQKRMVLDSIVEDPRANCLQHISWYKTEDIGRLREAWKTVVTHEPIFQTTFELDETQEPSQRLIGAGLFIWEETTVTTHAAIKESLKSLPAATGLGSRFRVLHCVGSEFPHNESMFVWAVHHALIDGYSASLVFEKVDKALQNEPFESSHPFMLAAQDIAQMRDKLAPEVDHFWKDQEAQYPGAAGEPLIPEALTNQSGVDFAEHVVNVSIDNQRLRFAAQQAQATPAAIFYAAWALLLSSYTNSDTVIFGAVFSGRNLPFSWAPCMVGPLLNILPLRCRIKRDIESASFVREIHQTIQNISRFQVADRPKDTPPFASTLTVQDSGLRSGTTAIPSLHSPEVRESNLLPLTVVVETDSQITFLYRTDRFSESHVKDMAAIYMSLLDAFLDPGRSLQHCMDRRFPIEMNQAILQTGNIDSEVARVPSVDGGHTLSSLFGTVASLHPTHIAVQKGSHSITYATLVQYAARVAAVIEKKTQPGEVVAILADRSINWIVGIMGATAANTVYCPLDSSYPAEYREDLLRRSHAKLFLVPSKSQLPTADSGVATVSIEDILASDIKPLYPWRKQTPSDGAYICFTSGSTGVPKGVLCLHQGVVSLQSSSEEGRLHSEPGRRIAQFMSTGFDVCVHEVFASLCYGATLVLRKDDDDPFSHLADVDVVSMNATVAGSLDPSEYPDLHYVYLAGEPIPQRTADKWAVGRKLYNAYGPTEATIIVTRTLLQAGILVAIGKPFPSVRAYILNDRRELQPPNTLGNLFVAGVQVSHGYLDLPEATANSYFPDPFLPGSSNERMYDTGDIGFWDTDGKIQCCGRKDRQVKVRGFRINLDGISNMATLRMPTIRHAAAFVKDGAVVLCVEPEDVNTDELRARLKDALPPHAIPRTIYSIAHIPLSLNGKIDVKHLAAMEVRNDTALTNGITKANKLDSAQQTSSNGLSNGASHASSEAHLEKLIIKEWQQLLGLDPSQPLSRSDDFVLLGGDSIRQLNLAARLRSVLGLPIKVKDIIRSSTLGDLITLVAQQQEQHGKKNVPNGTPAHNSVHRPLGYKKLSPPEMEWACKYRHSQSQSTFNVPYVARLSSAVDWQRLASALETVLNRHRVLRSRFTTKDGTGERVLSEHPISVNRTVDDIDIQEVINRPFEFDSSEALIRTVISPSTLVLCISHILCDLTAINTLLYEVAATYRGLALPPVVREYFDVTWHHTVDPEKQRFWAEYLQGLSFKQPDEVKQVNGVNGCDHSNGTKIRKPRSYRGTSRTTSLSDSLYRHLIISSTKNGFTFHQFGMAVAGLVLHFLTGRDDIVLGSPFVNRPSFEDRQVIGLFLEPLPVRISVKHQNENDGGPGAREFVQSVRQSSQSALAHSVPWAELMSHLGLPFPSAQPQVFSCCVTFHDDRGTDPPLAINGVEGQYISAEGAKFPLLFEWQATRATGQHEQLTVRLEYDTDWFSAEFTEILEALLLECFRMLLEEEGSRHGEVKGRLGEVLQSEATRIGVAVDEIYETARQYLTVV</sequence>
<protein>
    <recommendedName>
        <fullName evidence="8">Nonribosomal peptide synthetase criC</fullName>
        <shortName evidence="8">NRPS criC</shortName>
        <ecNumber evidence="7">6.3.2.-</ecNumber>
    </recommendedName>
    <alternativeName>
        <fullName evidence="8">Echinulin biosynthesis cluster protein C</fullName>
    </alternativeName>
</protein>
<organism>
    <name type="scientific">Aspergillus cristatus</name>
    <name type="common">Chinese Fuzhuan brick tea-fermentation fungus</name>
    <name type="synonym">Eurotium cristatum</name>
    <dbReference type="NCBI Taxonomy" id="573508"/>
    <lineage>
        <taxon>Eukaryota</taxon>
        <taxon>Fungi</taxon>
        <taxon>Dikarya</taxon>
        <taxon>Ascomycota</taxon>
        <taxon>Pezizomycotina</taxon>
        <taxon>Eurotiomycetes</taxon>
        <taxon>Eurotiomycetidae</taxon>
        <taxon>Eurotiales</taxon>
        <taxon>Aspergillaceae</taxon>
        <taxon>Aspergillus</taxon>
        <taxon>Aspergillus subgen. Aspergillus</taxon>
    </lineage>
</organism>
<dbReference type="EC" id="6.3.2.-" evidence="7"/>
<dbReference type="EMBL" id="JXNT01000024">
    <property type="protein sequence ID" value="ODM14527.1"/>
    <property type="molecule type" value="Genomic_DNA"/>
</dbReference>
<dbReference type="SMR" id="A0A1E3B0T2"/>
<dbReference type="STRING" id="573508.A0A1E3B0T2"/>
<dbReference type="VEuPathDB" id="FungiDB:SI65_10013"/>
<dbReference type="OrthoDB" id="416786at2759"/>
<dbReference type="Proteomes" id="UP000094569">
    <property type="component" value="Unassembled WGS sequence"/>
</dbReference>
<dbReference type="GO" id="GO:0005737">
    <property type="term" value="C:cytoplasm"/>
    <property type="evidence" value="ECO:0007669"/>
    <property type="project" value="TreeGrafter"/>
</dbReference>
<dbReference type="GO" id="GO:0016874">
    <property type="term" value="F:ligase activity"/>
    <property type="evidence" value="ECO:0007669"/>
    <property type="project" value="UniProtKB-KW"/>
</dbReference>
<dbReference type="GO" id="GO:0031177">
    <property type="term" value="F:phosphopantetheine binding"/>
    <property type="evidence" value="ECO:0007669"/>
    <property type="project" value="TreeGrafter"/>
</dbReference>
<dbReference type="GO" id="GO:0043041">
    <property type="term" value="P:amino acid activation for nonribosomal peptide biosynthetic process"/>
    <property type="evidence" value="ECO:0007669"/>
    <property type="project" value="TreeGrafter"/>
</dbReference>
<dbReference type="GO" id="GO:0044550">
    <property type="term" value="P:secondary metabolite biosynthetic process"/>
    <property type="evidence" value="ECO:0007669"/>
    <property type="project" value="TreeGrafter"/>
</dbReference>
<dbReference type="CDD" id="cd19537">
    <property type="entry name" value="C_NRPS-like"/>
    <property type="match status" value="1"/>
</dbReference>
<dbReference type="Gene3D" id="3.30.300.30">
    <property type="match status" value="2"/>
</dbReference>
<dbReference type="Gene3D" id="1.10.1200.10">
    <property type="entry name" value="ACP-like"/>
    <property type="match status" value="2"/>
</dbReference>
<dbReference type="Gene3D" id="3.30.559.10">
    <property type="entry name" value="Chloramphenicol acetyltransferase-like domain"/>
    <property type="match status" value="2"/>
</dbReference>
<dbReference type="Gene3D" id="3.40.50.12780">
    <property type="entry name" value="N-terminal domain of ligase-like"/>
    <property type="match status" value="2"/>
</dbReference>
<dbReference type="Gene3D" id="3.30.559.30">
    <property type="entry name" value="Nonribosomal peptide synthetase, condensation domain"/>
    <property type="match status" value="2"/>
</dbReference>
<dbReference type="InterPro" id="IPR036736">
    <property type="entry name" value="ACP-like_sf"/>
</dbReference>
<dbReference type="InterPro" id="IPR045851">
    <property type="entry name" value="AMP-bd_C_sf"/>
</dbReference>
<dbReference type="InterPro" id="IPR020845">
    <property type="entry name" value="AMP-binding_CS"/>
</dbReference>
<dbReference type="InterPro" id="IPR000873">
    <property type="entry name" value="AMP-dep_synth/lig_dom"/>
</dbReference>
<dbReference type="InterPro" id="IPR042099">
    <property type="entry name" value="ANL_N_sf"/>
</dbReference>
<dbReference type="InterPro" id="IPR023213">
    <property type="entry name" value="CAT-like_dom_sf"/>
</dbReference>
<dbReference type="InterPro" id="IPR001242">
    <property type="entry name" value="Condensatn"/>
</dbReference>
<dbReference type="InterPro" id="IPR009081">
    <property type="entry name" value="PP-bd_ACP"/>
</dbReference>
<dbReference type="InterPro" id="IPR006162">
    <property type="entry name" value="Ppantetheine_attach_site"/>
</dbReference>
<dbReference type="PANTHER" id="PTHR45527">
    <property type="entry name" value="NONRIBOSOMAL PEPTIDE SYNTHETASE"/>
    <property type="match status" value="1"/>
</dbReference>
<dbReference type="PANTHER" id="PTHR45527:SF11">
    <property type="entry name" value="NONRIBOSOMAL PEPTIDE SYNTHETASE 5"/>
    <property type="match status" value="1"/>
</dbReference>
<dbReference type="Pfam" id="PF00501">
    <property type="entry name" value="AMP-binding"/>
    <property type="match status" value="2"/>
</dbReference>
<dbReference type="Pfam" id="PF00668">
    <property type="entry name" value="Condensation"/>
    <property type="match status" value="2"/>
</dbReference>
<dbReference type="Pfam" id="PF00550">
    <property type="entry name" value="PP-binding"/>
    <property type="match status" value="1"/>
</dbReference>
<dbReference type="SUPFAM" id="SSF56801">
    <property type="entry name" value="Acetyl-CoA synthetase-like"/>
    <property type="match status" value="2"/>
</dbReference>
<dbReference type="SUPFAM" id="SSF47336">
    <property type="entry name" value="ACP-like"/>
    <property type="match status" value="1"/>
</dbReference>
<dbReference type="SUPFAM" id="SSF52777">
    <property type="entry name" value="CoA-dependent acyltransferases"/>
    <property type="match status" value="4"/>
</dbReference>
<dbReference type="PROSITE" id="PS00455">
    <property type="entry name" value="AMP_BINDING"/>
    <property type="match status" value="1"/>
</dbReference>
<dbReference type="PROSITE" id="PS50075">
    <property type="entry name" value="CARRIER"/>
    <property type="match status" value="1"/>
</dbReference>
<dbReference type="PROSITE" id="PS00012">
    <property type="entry name" value="PHOSPHOPANTETHEINE"/>
    <property type="match status" value="1"/>
</dbReference>